<dbReference type="EC" id="2.3.1.275" evidence="1"/>
<dbReference type="EMBL" id="AE017308">
    <property type="protein sequence ID" value="AAT27604.1"/>
    <property type="molecule type" value="Genomic_DNA"/>
</dbReference>
<dbReference type="RefSeq" id="WP_011264638.1">
    <property type="nucleotide sequence ID" value="NC_006908.1"/>
</dbReference>
<dbReference type="SMR" id="Q6KIH2"/>
<dbReference type="STRING" id="267748.MMOB1180"/>
<dbReference type="KEGG" id="mmo:MMOB1180"/>
<dbReference type="eggNOG" id="COG0344">
    <property type="taxonomic scope" value="Bacteria"/>
</dbReference>
<dbReference type="HOGENOM" id="CLU_081254_3_0_14"/>
<dbReference type="OrthoDB" id="9777124at2"/>
<dbReference type="UniPathway" id="UPA00085"/>
<dbReference type="Proteomes" id="UP000009072">
    <property type="component" value="Chromosome"/>
</dbReference>
<dbReference type="GO" id="GO:0005886">
    <property type="term" value="C:plasma membrane"/>
    <property type="evidence" value="ECO:0007669"/>
    <property type="project" value="UniProtKB-SubCell"/>
</dbReference>
<dbReference type="GO" id="GO:0043772">
    <property type="term" value="F:acyl-phosphate glycerol-3-phosphate acyltransferase activity"/>
    <property type="evidence" value="ECO:0007669"/>
    <property type="project" value="UniProtKB-UniRule"/>
</dbReference>
<dbReference type="GO" id="GO:0008654">
    <property type="term" value="P:phospholipid biosynthetic process"/>
    <property type="evidence" value="ECO:0007669"/>
    <property type="project" value="UniProtKB-UniRule"/>
</dbReference>
<dbReference type="HAMAP" id="MF_01043">
    <property type="entry name" value="PlsY"/>
    <property type="match status" value="1"/>
</dbReference>
<dbReference type="InterPro" id="IPR003811">
    <property type="entry name" value="G3P_acylTferase_PlsY"/>
</dbReference>
<dbReference type="NCBIfam" id="TIGR00023">
    <property type="entry name" value="glycerol-3-phosphate 1-O-acyltransferase PlsY"/>
    <property type="match status" value="1"/>
</dbReference>
<dbReference type="PANTHER" id="PTHR30309:SF0">
    <property type="entry name" value="GLYCEROL-3-PHOSPHATE ACYLTRANSFERASE-RELATED"/>
    <property type="match status" value="1"/>
</dbReference>
<dbReference type="PANTHER" id="PTHR30309">
    <property type="entry name" value="INNER MEMBRANE PROTEIN YGIH"/>
    <property type="match status" value="1"/>
</dbReference>
<dbReference type="Pfam" id="PF02660">
    <property type="entry name" value="G3P_acyltransf"/>
    <property type="match status" value="1"/>
</dbReference>
<dbReference type="SMART" id="SM01207">
    <property type="entry name" value="G3P_acyltransf"/>
    <property type="match status" value="1"/>
</dbReference>
<keyword id="KW-1003">Cell membrane</keyword>
<keyword id="KW-0444">Lipid biosynthesis</keyword>
<keyword id="KW-0443">Lipid metabolism</keyword>
<keyword id="KW-0472">Membrane</keyword>
<keyword id="KW-0594">Phospholipid biosynthesis</keyword>
<keyword id="KW-1208">Phospholipid metabolism</keyword>
<keyword id="KW-1185">Reference proteome</keyword>
<keyword id="KW-0808">Transferase</keyword>
<keyword id="KW-0812">Transmembrane</keyword>
<keyword id="KW-1133">Transmembrane helix</keyword>
<evidence type="ECO:0000255" key="1">
    <source>
        <dbReference type="HAMAP-Rule" id="MF_01043"/>
    </source>
</evidence>
<sequence length="238" mass="26751">MSLEVIFGSNILLILVAYFIGSINFSIIVSKIFKKSDIREKGSKNAGATNMARNFGFKIGFLVFFLDVSKSFWFAIISAILRDFVPFFGAVITQLVVLFVIIGHVFPIYFKFKGGKGAATNLGMIASLNIILAIIGGIIFFAMIFRWKIVSLGSFITPFILVIFMIIPWMNSSIIAYVGYSDFYQPVRESFQGAWYLSSLFLFLAALIILFTHIPNIKKLIKKEESVLKFSKKSKKLA</sequence>
<comment type="function">
    <text evidence="1">Catalyzes the transfer of an acyl group from acyl-phosphate (acyl-PO(4)) to glycerol-3-phosphate (G3P) to form lysophosphatidic acid (LPA). This enzyme utilizes acyl-phosphate as fatty acyl donor, but not acyl-CoA or acyl-ACP.</text>
</comment>
<comment type="catalytic activity">
    <reaction evidence="1">
        <text>an acyl phosphate + sn-glycerol 3-phosphate = a 1-acyl-sn-glycero-3-phosphate + phosphate</text>
        <dbReference type="Rhea" id="RHEA:34075"/>
        <dbReference type="ChEBI" id="CHEBI:43474"/>
        <dbReference type="ChEBI" id="CHEBI:57597"/>
        <dbReference type="ChEBI" id="CHEBI:57970"/>
        <dbReference type="ChEBI" id="CHEBI:59918"/>
        <dbReference type="EC" id="2.3.1.275"/>
    </reaction>
</comment>
<comment type="pathway">
    <text evidence="1">Lipid metabolism; phospholipid metabolism.</text>
</comment>
<comment type="subunit">
    <text evidence="1">Probably interacts with PlsX.</text>
</comment>
<comment type="subcellular location">
    <subcellularLocation>
        <location evidence="1">Cell membrane</location>
        <topology evidence="1">Multi-pass membrane protein</topology>
    </subcellularLocation>
</comment>
<comment type="similarity">
    <text evidence="1">Belongs to the PlsY family.</text>
</comment>
<gene>
    <name evidence="1" type="primary">plsY</name>
    <name type="ordered locus">MMOB1180</name>
</gene>
<protein>
    <recommendedName>
        <fullName evidence="1">Glycerol-3-phosphate acyltransferase</fullName>
    </recommendedName>
    <alternativeName>
        <fullName evidence="1">Acyl-PO4 G3P acyltransferase</fullName>
    </alternativeName>
    <alternativeName>
        <fullName evidence="1">Acyl-phosphate--glycerol-3-phosphate acyltransferase</fullName>
    </alternativeName>
    <alternativeName>
        <fullName evidence="1">G3P acyltransferase</fullName>
        <shortName evidence="1">GPAT</shortName>
        <ecNumber evidence="1">2.3.1.275</ecNumber>
    </alternativeName>
    <alternativeName>
        <fullName evidence="1">Lysophosphatidic acid synthase</fullName>
        <shortName evidence="1">LPA synthase</shortName>
    </alternativeName>
</protein>
<name>PLSY_MYCM1</name>
<reference key="1">
    <citation type="journal article" date="2004" name="Genome Res.">
        <title>The complete genome and proteome of Mycoplasma mobile.</title>
        <authorList>
            <person name="Jaffe J.D."/>
            <person name="Stange-Thomann N."/>
            <person name="Smith C."/>
            <person name="DeCaprio D."/>
            <person name="Fisher S."/>
            <person name="Butler J."/>
            <person name="Calvo S."/>
            <person name="Elkins T."/>
            <person name="FitzGerald M.G."/>
            <person name="Hafez N."/>
            <person name="Kodira C.D."/>
            <person name="Major J."/>
            <person name="Wang S."/>
            <person name="Wilkinson J."/>
            <person name="Nicol R."/>
            <person name="Nusbaum C."/>
            <person name="Birren B."/>
            <person name="Berg H.C."/>
            <person name="Church G.M."/>
        </authorList>
    </citation>
    <scope>NUCLEOTIDE SEQUENCE [LARGE SCALE GENOMIC DNA]</scope>
    <source>
        <strain>ATCC 43663 / NCTC 11711 / 163 K</strain>
    </source>
</reference>
<organism>
    <name type="scientific">Mycoplasma mobile (strain ATCC 43663 / 163K / NCTC 11711)</name>
    <name type="common">Mesomycoplasma mobile</name>
    <dbReference type="NCBI Taxonomy" id="267748"/>
    <lineage>
        <taxon>Bacteria</taxon>
        <taxon>Bacillati</taxon>
        <taxon>Mycoplasmatota</taxon>
        <taxon>Mycoplasmoidales</taxon>
        <taxon>Metamycoplasmataceae</taxon>
        <taxon>Mesomycoplasma</taxon>
    </lineage>
</organism>
<accession>Q6KIH2</accession>
<feature type="chain" id="PRO_0000188403" description="Glycerol-3-phosphate acyltransferase">
    <location>
        <begin position="1"/>
        <end position="238"/>
    </location>
</feature>
<feature type="transmembrane region" description="Helical" evidence="1">
    <location>
        <begin position="5"/>
        <end position="25"/>
    </location>
</feature>
<feature type="transmembrane region" description="Helical" evidence="1">
    <location>
        <begin position="61"/>
        <end position="81"/>
    </location>
</feature>
<feature type="transmembrane region" description="Helical" evidence="1">
    <location>
        <begin position="88"/>
        <end position="108"/>
    </location>
</feature>
<feature type="transmembrane region" description="Helical" evidence="1">
    <location>
        <begin position="125"/>
        <end position="145"/>
    </location>
</feature>
<feature type="transmembrane region" description="Helical" evidence="1">
    <location>
        <begin position="149"/>
        <end position="169"/>
    </location>
</feature>
<feature type="transmembrane region" description="Helical" evidence="1">
    <location>
        <begin position="194"/>
        <end position="214"/>
    </location>
</feature>
<proteinExistence type="inferred from homology"/>